<evidence type="ECO:0000255" key="1">
    <source>
        <dbReference type="HAMAP-Rule" id="MF_01539"/>
    </source>
</evidence>
<protein>
    <recommendedName>
        <fullName evidence="1">tRNA(Met) cytidine acetate ligase</fullName>
        <ecNumber evidence="1">6.3.4.-</ecNumber>
    </recommendedName>
</protein>
<feature type="chain" id="PRO_0000300184" description="tRNA(Met) cytidine acetate ligase">
    <location>
        <begin position="1"/>
        <end position="307"/>
    </location>
</feature>
<feature type="binding site" evidence="1">
    <location>
        <begin position="12"/>
        <end position="25"/>
    </location>
    <ligand>
        <name>ATP</name>
        <dbReference type="ChEBI" id="CHEBI:30616"/>
    </ligand>
</feature>
<feature type="binding site" evidence="1">
    <location>
        <position position="106"/>
    </location>
    <ligand>
        <name>ATP</name>
        <dbReference type="ChEBI" id="CHEBI:30616"/>
    </ligand>
</feature>
<feature type="binding site" evidence="1">
    <location>
        <position position="163"/>
    </location>
    <ligand>
        <name>ATP</name>
        <dbReference type="ChEBI" id="CHEBI:30616"/>
    </ligand>
</feature>
<feature type="binding site" evidence="1">
    <location>
        <position position="188"/>
    </location>
    <ligand>
        <name>ATP</name>
        <dbReference type="ChEBI" id="CHEBI:30616"/>
    </ligand>
</feature>
<gene>
    <name evidence="1" type="primary">tmcAL</name>
    <name type="ordered locus">MS53_0162</name>
</gene>
<proteinExistence type="inferred from homology"/>
<reference key="1">
    <citation type="journal article" date="2005" name="J. Bacteriol.">
        <title>Swine and poultry pathogens: the complete genome sequences of two strains of Mycoplasma hyopneumoniae and a strain of Mycoplasma synoviae.</title>
        <authorList>
            <person name="Vasconcelos A.T.R."/>
            <person name="Ferreira H.B."/>
            <person name="Bizarro C.V."/>
            <person name="Bonatto S.L."/>
            <person name="Carvalho M.O."/>
            <person name="Pinto P.M."/>
            <person name="Almeida D.F."/>
            <person name="Almeida L.G.P."/>
            <person name="Almeida R."/>
            <person name="Alves-Junior L."/>
            <person name="Assuncao E.N."/>
            <person name="Azevedo V.A.C."/>
            <person name="Bogo M.R."/>
            <person name="Brigido M.M."/>
            <person name="Brocchi M."/>
            <person name="Burity H.A."/>
            <person name="Camargo A.A."/>
            <person name="Camargo S.S."/>
            <person name="Carepo M.S."/>
            <person name="Carraro D.M."/>
            <person name="de Mattos Cascardo J.C."/>
            <person name="Castro L.A."/>
            <person name="Cavalcanti G."/>
            <person name="Chemale G."/>
            <person name="Collevatti R.G."/>
            <person name="Cunha C.W."/>
            <person name="Dallagiovanna B."/>
            <person name="Dambros B.P."/>
            <person name="Dellagostin O.A."/>
            <person name="Falcao C."/>
            <person name="Fantinatti-Garboggini F."/>
            <person name="Felipe M.S.S."/>
            <person name="Fiorentin L."/>
            <person name="Franco G.R."/>
            <person name="Freitas N.S.A."/>
            <person name="Frias D."/>
            <person name="Grangeiro T.B."/>
            <person name="Grisard E.C."/>
            <person name="Guimaraes C.T."/>
            <person name="Hungria M."/>
            <person name="Jardim S.N."/>
            <person name="Krieger M.A."/>
            <person name="Laurino J.P."/>
            <person name="Lima L.F.A."/>
            <person name="Lopes M.I."/>
            <person name="Loreto E.L.S."/>
            <person name="Madeira H.M.F."/>
            <person name="Manfio G.P."/>
            <person name="Maranhao A.Q."/>
            <person name="Martinkovics C.T."/>
            <person name="Medeiros S.R.B."/>
            <person name="Moreira M.A.M."/>
            <person name="Neiva M."/>
            <person name="Ramalho-Neto C.E."/>
            <person name="Nicolas M.F."/>
            <person name="Oliveira S.C."/>
            <person name="Paixao R.F.C."/>
            <person name="Pedrosa F.O."/>
            <person name="Pena S.D.J."/>
            <person name="Pereira M."/>
            <person name="Pereira-Ferrari L."/>
            <person name="Piffer I."/>
            <person name="Pinto L.S."/>
            <person name="Potrich D.P."/>
            <person name="Salim A.C.M."/>
            <person name="Santos F.R."/>
            <person name="Schmitt R."/>
            <person name="Schneider M.P.C."/>
            <person name="Schrank A."/>
            <person name="Schrank I.S."/>
            <person name="Schuck A.F."/>
            <person name="Seuanez H.N."/>
            <person name="Silva D.W."/>
            <person name="Silva R."/>
            <person name="Silva S.C."/>
            <person name="Soares C.M.A."/>
            <person name="Souza K.R.L."/>
            <person name="Souza R.C."/>
            <person name="Staats C.C."/>
            <person name="Steffens M.B.R."/>
            <person name="Teixeira S.M.R."/>
            <person name="Urmenyi T.P."/>
            <person name="Vainstein M.H."/>
            <person name="Zuccherato L.W."/>
            <person name="Simpson A.J.G."/>
            <person name="Zaha A."/>
        </authorList>
    </citation>
    <scope>NUCLEOTIDE SEQUENCE [LARGE SCALE GENOMIC DNA]</scope>
    <source>
        <strain>53</strain>
    </source>
</reference>
<sequence>MLINKNLKIGIVVEYNPFHNGHIYQLNWIKNNYPNSKIIIVMSHKYSQRGEIICMPFWKRKLWAKKYDVSKVLKLSTRKTIQAAHIFAQNAIQKLNKEKIDILVFGSESTNDSLMLKIATFIKENKEIYNQTLKKNLKGGNSFPKANFLTLKELTNEDFSLPNDILGFEYIKQIVENNYKIQPIAIKRSVGFHSEEPSDEFASASLIRKMLKDGRDVSKYTPVDLKQIPTKLLIENTFLKFKKYILKTPASKLKKYLLVDEGIENLFKKNILLFDNYHDFIDACVSRRYTRSKIMRTYLCILLKIKK</sequence>
<comment type="function">
    <text evidence="1">Catalyzes the formation of N(4)-acetylcytidine (ac(4)C) at the wobble position of elongator tRNA(Met), using acetate and ATP as substrates. First activates an acetate ion to form acetyladenylate (Ac-AMP) and then transfers the acetyl group to tRNA to form ac(4)C34.</text>
</comment>
<comment type="catalytic activity">
    <reaction evidence="1">
        <text>cytidine(34) in elongator tRNA(Met) + acetate + ATP = N(4)-acetylcytidine(34) in elongator tRNA(Met) + AMP + diphosphate</text>
        <dbReference type="Rhea" id="RHEA:58144"/>
        <dbReference type="Rhea" id="RHEA-COMP:10693"/>
        <dbReference type="Rhea" id="RHEA-COMP:10694"/>
        <dbReference type="ChEBI" id="CHEBI:30089"/>
        <dbReference type="ChEBI" id="CHEBI:30616"/>
        <dbReference type="ChEBI" id="CHEBI:33019"/>
        <dbReference type="ChEBI" id="CHEBI:74900"/>
        <dbReference type="ChEBI" id="CHEBI:82748"/>
        <dbReference type="ChEBI" id="CHEBI:456215"/>
    </reaction>
</comment>
<comment type="subcellular location">
    <subcellularLocation>
        <location evidence="1">Cytoplasm</location>
    </subcellularLocation>
</comment>
<comment type="similarity">
    <text evidence="1">Belongs to the TmcAL family.</text>
</comment>
<organism>
    <name type="scientific">Mycoplasmopsis synoviae (strain 53)</name>
    <name type="common">Mycoplasma synoviae</name>
    <dbReference type="NCBI Taxonomy" id="262723"/>
    <lineage>
        <taxon>Bacteria</taxon>
        <taxon>Bacillati</taxon>
        <taxon>Mycoplasmatota</taxon>
        <taxon>Mycoplasmoidales</taxon>
        <taxon>Metamycoplasmataceae</taxon>
        <taxon>Mycoplasmopsis</taxon>
    </lineage>
</organism>
<keyword id="KW-0067">ATP-binding</keyword>
<keyword id="KW-0963">Cytoplasm</keyword>
<keyword id="KW-0436">Ligase</keyword>
<keyword id="KW-0547">Nucleotide-binding</keyword>
<keyword id="KW-1185">Reference proteome</keyword>
<keyword id="KW-0694">RNA-binding</keyword>
<keyword id="KW-0819">tRNA processing</keyword>
<keyword id="KW-0820">tRNA-binding</keyword>
<dbReference type="EC" id="6.3.4.-" evidence="1"/>
<dbReference type="EMBL" id="AE017245">
    <property type="protein sequence ID" value="AAZ43582.1"/>
    <property type="molecule type" value="Genomic_DNA"/>
</dbReference>
<dbReference type="RefSeq" id="WP_011283325.1">
    <property type="nucleotide sequence ID" value="NC_007294.1"/>
</dbReference>
<dbReference type="SMR" id="Q4A6N9"/>
<dbReference type="STRING" id="262723.MS53_0162"/>
<dbReference type="KEGG" id="msy:MS53_0162"/>
<dbReference type="eggNOG" id="COG1323">
    <property type="taxonomic scope" value="Bacteria"/>
</dbReference>
<dbReference type="HOGENOM" id="CLU_038915_1_0_14"/>
<dbReference type="OrthoDB" id="9769796at2"/>
<dbReference type="Proteomes" id="UP000000549">
    <property type="component" value="Chromosome"/>
</dbReference>
<dbReference type="GO" id="GO:0005737">
    <property type="term" value="C:cytoplasm"/>
    <property type="evidence" value="ECO:0007669"/>
    <property type="project" value="UniProtKB-SubCell"/>
</dbReference>
<dbReference type="GO" id="GO:0005524">
    <property type="term" value="F:ATP binding"/>
    <property type="evidence" value="ECO:0007669"/>
    <property type="project" value="UniProtKB-KW"/>
</dbReference>
<dbReference type="GO" id="GO:0016879">
    <property type="term" value="F:ligase activity, forming carbon-nitrogen bonds"/>
    <property type="evidence" value="ECO:0007669"/>
    <property type="project" value="UniProtKB-UniRule"/>
</dbReference>
<dbReference type="GO" id="GO:0000049">
    <property type="term" value="F:tRNA binding"/>
    <property type="evidence" value="ECO:0007669"/>
    <property type="project" value="UniProtKB-KW"/>
</dbReference>
<dbReference type="GO" id="GO:0006400">
    <property type="term" value="P:tRNA modification"/>
    <property type="evidence" value="ECO:0007669"/>
    <property type="project" value="UniProtKB-UniRule"/>
</dbReference>
<dbReference type="Gene3D" id="3.40.50.620">
    <property type="entry name" value="HUPs"/>
    <property type="match status" value="1"/>
</dbReference>
<dbReference type="HAMAP" id="MF_01539">
    <property type="entry name" value="TmcAL"/>
    <property type="match status" value="1"/>
</dbReference>
<dbReference type="InterPro" id="IPR014729">
    <property type="entry name" value="Rossmann-like_a/b/a_fold"/>
</dbReference>
<dbReference type="InterPro" id="IPR008513">
    <property type="entry name" value="tRNA(Met)_cyd_acetate_ligase"/>
</dbReference>
<dbReference type="NCBIfam" id="NF010192">
    <property type="entry name" value="PRK13671.1"/>
    <property type="match status" value="1"/>
</dbReference>
<dbReference type="PANTHER" id="PTHR37825">
    <property type="entry name" value="TRNA(MET) CYTIDINE ACETATE LIGASE"/>
    <property type="match status" value="1"/>
</dbReference>
<dbReference type="PANTHER" id="PTHR37825:SF1">
    <property type="entry name" value="TRNA(MET) CYTIDINE ACETATE LIGASE"/>
    <property type="match status" value="1"/>
</dbReference>
<dbReference type="Pfam" id="PF05636">
    <property type="entry name" value="HIGH_NTase1"/>
    <property type="match status" value="1"/>
</dbReference>
<dbReference type="SUPFAM" id="SSF52374">
    <property type="entry name" value="Nucleotidylyl transferase"/>
    <property type="match status" value="1"/>
</dbReference>
<accession>Q4A6N9</accession>
<name>TMCAL_MYCS5</name>